<reference key="1">
    <citation type="submission" date="2003-03" db="EMBL/GenBank/DDBJ databases">
        <title>Structure-function and organization of cowpox virus strain GRI-90 complete genome.</title>
        <authorList>
            <person name="Shchelkunov S.N."/>
            <person name="Safronov P.F."/>
            <person name="Totmenin A.V."/>
            <person name="Miheev M.V."/>
            <person name="Ryazankina O.I."/>
            <person name="Petrov N.A."/>
            <person name="Gutorov V.V."/>
            <person name="Kotwal G.J."/>
            <person name="Sandakhchiev L.S."/>
        </authorList>
    </citation>
    <scope>NUCLEOTIDE SEQUENCE [LARGE SCALE GENOMIC DNA]</scope>
</reference>
<proteinExistence type="inferred from homology"/>
<organism>
    <name type="scientific">Cowpox virus (strain GRI-90 / Grishak)</name>
    <name type="common">CPV</name>
    <dbReference type="NCBI Taxonomy" id="265871"/>
    <lineage>
        <taxon>Viruses</taxon>
        <taxon>Varidnaviria</taxon>
        <taxon>Bamfordvirae</taxon>
        <taxon>Nucleocytoviricota</taxon>
        <taxon>Pokkesviricetes</taxon>
        <taxon>Chitovirales</taxon>
        <taxon>Poxviridae</taxon>
        <taxon>Chordopoxvirinae</taxon>
        <taxon>Orthopoxvirus</taxon>
        <taxon>Cowpox virus</taxon>
    </lineage>
</organism>
<accession>Q76QK5</accession>
<organismHost>
    <name type="scientific">Bos taurus</name>
    <name type="common">Bovine</name>
    <dbReference type="NCBI Taxonomy" id="9913"/>
</organismHost>
<organismHost>
    <name type="scientific">Felis catus</name>
    <name type="common">Cat</name>
    <name type="synonym">Felis silvestris catus</name>
    <dbReference type="NCBI Taxonomy" id="9685"/>
</organismHost>
<organismHost>
    <name type="scientific">Homo sapiens</name>
    <name type="common">Human</name>
    <dbReference type="NCBI Taxonomy" id="9606"/>
</organismHost>
<organismHost>
    <name type="scientific">Loxodonta africana</name>
    <name type="common">African elephant</name>
    <dbReference type="NCBI Taxonomy" id="9785"/>
</organismHost>
<organismHost>
    <name type="scientific">Microtus agrestis</name>
    <name type="common">Short-tailed field vole</name>
    <dbReference type="NCBI Taxonomy" id="29092"/>
</organismHost>
<organismHost>
    <name type="scientific">Mus musculus</name>
    <name type="common">Mouse</name>
    <dbReference type="NCBI Taxonomy" id="10090"/>
</organismHost>
<organismHost>
    <name type="scientific">Myodes glareolus</name>
    <name type="common">Bank vole</name>
    <name type="synonym">Clethrionomys glareolus</name>
    <dbReference type="NCBI Taxonomy" id="447135"/>
</organismHost>
<sequence length="124" mass="14014">MKNVLIIFGKPYCSICENVSEAVEELKSEYDILHVDILSFFLKDGDSSMLGDVKRGTLIGNFAAHLSNYIVSIFKYNPQTKQMAFVDINKSLDFTKTDKSLVNLEILKSEIEKANYGVWPPVTE</sequence>
<protein>
    <recommendedName>
        <fullName>Glutaredoxin-2</fullName>
    </recommendedName>
</protein>
<name>GLRX2_CWPXG</name>
<gene>
    <name type="primary">OPG088</name>
    <name type="ORF">H4L</name>
</gene>
<evidence type="ECO:0000250" key="1">
    <source>
        <dbReference type="UniProtKB" id="P68460"/>
    </source>
</evidence>
<evidence type="ECO:0000305" key="2"/>
<feature type="chain" id="PRO_0000141634" description="Glutaredoxin-2">
    <location>
        <begin position="1"/>
        <end position="124"/>
    </location>
</feature>
<feature type="disulfide bond" description="Redox-active" evidence="1">
    <location>
        <begin position="13"/>
        <end position="16"/>
    </location>
</feature>
<keyword id="KW-1015">Disulfide bond</keyword>
<keyword id="KW-0249">Electron transport</keyword>
<keyword id="KW-1035">Host cytoplasm</keyword>
<keyword id="KW-0676">Redox-active center</keyword>
<keyword id="KW-0813">Transport</keyword>
<comment type="function">
    <text evidence="1">Glutaredoxin necessary for virion morphogenesis and virus replication. Functions as a thiol-disulfide transfer protein between membrane-associated OPG128 and substrates OPG095 or OPG053. The complete pathway for formation of disulfide bonds in intracellular virion membrane proteins sequentially involves oxidation of OPG072, OPG128 and OPG088. Exhibit thioltransferase and dehydroascorbate reductase activities in vitro.</text>
</comment>
<comment type="subunit">
    <text evidence="1">Homodimer.</text>
</comment>
<comment type="subcellular location">
    <subcellularLocation>
        <location evidence="1">Host cytoplasm</location>
    </subcellularLocation>
</comment>
<comment type="induction">
    <text evidence="1">Expressed in the intermediate phase of the viral replicative cycle.</text>
</comment>
<comment type="similarity">
    <text evidence="2">Belongs to the glutaredoxin family.</text>
</comment>
<dbReference type="EMBL" id="X94355">
    <property type="protein sequence ID" value="CAD90630.1"/>
    <property type="molecule type" value="Genomic_DNA"/>
</dbReference>
<dbReference type="SMR" id="Q76QK5"/>
<dbReference type="Proteomes" id="UP000137384">
    <property type="component" value="Segment"/>
</dbReference>
<dbReference type="GO" id="GO:0030430">
    <property type="term" value="C:host cell cytoplasm"/>
    <property type="evidence" value="ECO:0007669"/>
    <property type="project" value="UniProtKB-SubCell"/>
</dbReference>
<dbReference type="Gene3D" id="3.40.30.10">
    <property type="entry name" value="Glutaredoxin"/>
    <property type="match status" value="1"/>
</dbReference>
<dbReference type="InterPro" id="IPR008554">
    <property type="entry name" value="Glutaredoxin-like"/>
</dbReference>
<dbReference type="InterPro" id="IPR036249">
    <property type="entry name" value="Thioredoxin-like_sf"/>
</dbReference>
<dbReference type="Pfam" id="PF05768">
    <property type="entry name" value="Glrx-like"/>
    <property type="match status" value="1"/>
</dbReference>
<dbReference type="SUPFAM" id="SSF52833">
    <property type="entry name" value="Thioredoxin-like"/>
    <property type="match status" value="1"/>
</dbReference>